<proteinExistence type="evidence at protein level"/>
<keyword id="KW-0119">Carbohydrate metabolism</keyword>
<keyword id="KW-0146">Chitin degradation</keyword>
<keyword id="KW-0147">Chitin-binding</keyword>
<keyword id="KW-1015">Disulfide bond</keyword>
<keyword id="KW-0326">Glycosidase</keyword>
<keyword id="KW-0378">Hydrolase</keyword>
<keyword id="KW-0511">Multifunctional enzyme</keyword>
<keyword id="KW-0574">Periplasm</keyword>
<keyword id="KW-0624">Polysaccharide degradation</keyword>
<keyword id="KW-1185">Reference proteome</keyword>
<keyword id="KW-0677">Repeat</keyword>
<keyword id="KW-0732">Signal</keyword>
<accession>P13656</accession>
<accession>Q2M703</accession>
<evidence type="ECO:0000250" key="1"/>
<evidence type="ECO:0000255" key="2"/>
<evidence type="ECO:0000255" key="3">
    <source>
        <dbReference type="PROSITE-ProRule" id="PRU01258"/>
    </source>
</evidence>
<evidence type="ECO:0000256" key="4">
    <source>
        <dbReference type="SAM" id="MobiDB-lite"/>
    </source>
</evidence>
<evidence type="ECO:0000269" key="5">
    <source>
    </source>
</evidence>
<evidence type="ECO:0000305" key="6"/>
<gene>
    <name type="primary">chiA</name>
    <name type="synonym">yheB</name>
    <name type="ordered locus">b3338</name>
    <name type="ordered locus">JW3300</name>
</gene>
<feature type="signal peptide" evidence="2">
    <location>
        <begin position="1"/>
        <end position="24"/>
    </location>
</feature>
<feature type="chain" id="PRO_0000011907" description="Probable bifunctional chitinase/lysozyme">
    <location>
        <begin position="25"/>
        <end position="897"/>
    </location>
</feature>
<feature type="domain" description="Chitin-binding type-3 1">
    <location>
        <begin position="25"/>
        <end position="91"/>
    </location>
</feature>
<feature type="domain" description="Chitin-binding type-3 2">
    <location>
        <begin position="128"/>
        <end position="194"/>
    </location>
</feature>
<feature type="domain" description="Chitin-binding type-3 3">
    <location>
        <begin position="229"/>
        <end position="295"/>
    </location>
</feature>
<feature type="domain" description="Chitin-binding type-3 4">
    <location>
        <begin position="337"/>
        <end position="403"/>
    </location>
</feature>
<feature type="domain" description="Chitin-binding type-3 5">
    <location>
        <begin position="459"/>
        <end position="529"/>
    </location>
</feature>
<feature type="domain" description="GH18" evidence="3">
    <location>
        <begin position="586"/>
        <end position="877"/>
    </location>
</feature>
<feature type="region of interest" description="Disordered" evidence="4">
    <location>
        <begin position="90"/>
        <end position="127"/>
    </location>
</feature>
<feature type="region of interest" description="Disordered" evidence="4">
    <location>
        <begin position="182"/>
        <end position="222"/>
    </location>
</feature>
<feature type="region of interest" description="Disordered" evidence="4">
    <location>
        <begin position="287"/>
        <end position="333"/>
    </location>
</feature>
<feature type="compositionally biased region" description="Low complexity" evidence="4">
    <location>
        <begin position="95"/>
        <end position="111"/>
    </location>
</feature>
<feature type="compositionally biased region" description="Polar residues" evidence="4">
    <location>
        <begin position="113"/>
        <end position="127"/>
    </location>
</feature>
<feature type="compositionally biased region" description="Polar residues" evidence="4">
    <location>
        <begin position="182"/>
        <end position="197"/>
    </location>
</feature>
<feature type="compositionally biased region" description="Pro residues" evidence="4">
    <location>
        <begin position="198"/>
        <end position="216"/>
    </location>
</feature>
<feature type="compositionally biased region" description="Pro residues" evidence="4">
    <location>
        <begin position="309"/>
        <end position="318"/>
    </location>
</feature>
<feature type="compositionally biased region" description="Polar residues" evidence="4">
    <location>
        <begin position="322"/>
        <end position="333"/>
    </location>
</feature>
<feature type="active site" description="Proton donor" evidence="3">
    <location>
        <position position="700"/>
    </location>
</feature>
<feature type="disulfide bond" evidence="1">
    <location>
        <begin position="628"/>
        <end position="673"/>
    </location>
</feature>
<feature type="sequence conflict" description="In Ref. 3; AAC13985." evidence="6" ref="3">
    <original>F</original>
    <variation>I</variation>
    <location>
        <position position="874"/>
    </location>
</feature>
<reference key="1">
    <citation type="journal article" date="1997" name="Science">
        <title>The complete genome sequence of Escherichia coli K-12.</title>
        <authorList>
            <person name="Blattner F.R."/>
            <person name="Plunkett G. III"/>
            <person name="Bloch C.A."/>
            <person name="Perna N.T."/>
            <person name="Burland V."/>
            <person name="Riley M."/>
            <person name="Collado-Vides J."/>
            <person name="Glasner J.D."/>
            <person name="Rode C.K."/>
            <person name="Mayhew G.F."/>
            <person name="Gregor J."/>
            <person name="Davis N.W."/>
            <person name="Kirkpatrick H.A."/>
            <person name="Goeden M.A."/>
            <person name="Rose D.J."/>
            <person name="Mau B."/>
            <person name="Shao Y."/>
        </authorList>
    </citation>
    <scope>NUCLEOTIDE SEQUENCE [LARGE SCALE GENOMIC DNA]</scope>
    <source>
        <strain>K12 / MG1655 / ATCC 47076</strain>
    </source>
</reference>
<reference key="2">
    <citation type="journal article" date="2006" name="Mol. Syst. Biol.">
        <title>Highly accurate genome sequences of Escherichia coli K-12 strains MG1655 and W3110.</title>
        <authorList>
            <person name="Hayashi K."/>
            <person name="Morooka N."/>
            <person name="Yamamoto Y."/>
            <person name="Fujita K."/>
            <person name="Isono K."/>
            <person name="Choi S."/>
            <person name="Ohtsubo E."/>
            <person name="Baba T."/>
            <person name="Wanner B.L."/>
            <person name="Mori H."/>
            <person name="Horiuchi T."/>
        </authorList>
    </citation>
    <scope>NUCLEOTIDE SEQUENCE [LARGE SCALE GENOMIC DNA]</scope>
    <source>
        <strain>K12 / W3110 / ATCC 27325 / DSM 5911</strain>
    </source>
</reference>
<reference key="3">
    <citation type="journal article" date="1989" name="J. Bacteriol.">
        <title>Cloning, sequencing, and mapping of the bacterioferritin gene (bfr) of Escherichia coli K-12.</title>
        <authorList>
            <person name="Andrews S.C."/>
            <person name="Harrison P.M."/>
            <person name="Guest J.R."/>
        </authorList>
    </citation>
    <scope>NUCLEOTIDE SEQUENCE [GENOMIC DNA] OF 874-897</scope>
    <source>
        <strain>K12</strain>
    </source>
</reference>
<reference key="4">
    <citation type="journal article" date="1999" name="J. Bacteriol.">
        <title>Functional analysis of the carbohydrate-binding domains of Erwinia chrysanthemi Cel5 (Endoglucanase Z) and an Escherichia coli putative chitinase.</title>
        <authorList>
            <person name="Simpson H.D."/>
            <person name="Barras F."/>
        </authorList>
    </citation>
    <scope>CHITIN-BINDING PROPERTIES</scope>
</reference>
<reference key="5">
    <citation type="journal article" date="2000" name="Mol. Microbiol.">
        <title>The ChiA (YheB) protein of Escherichia coli K-12 is an endochitinase whose gene is negatively controlled by the nucleoid-structuring protein H-NS.</title>
        <authorList>
            <person name="Francetic O."/>
            <person name="Badaut C."/>
            <person name="Rimsky S."/>
            <person name="Pugsley A.P."/>
        </authorList>
    </citation>
    <scope>FUNCTION</scope>
    <scope>CATALYTIC ACTIVITY</scope>
    <scope>SUBCELLULAR LOCATION</scope>
    <scope>TRANSCRIPTIONAL REGULATION</scope>
    <scope>GENE NAME</scope>
    <source>
        <strain>K12 / MG1655 / ATCC 47076</strain>
    </source>
</reference>
<reference key="6">
    <citation type="journal article" date="2000" name="EMBO J.">
        <title>Expression of the endogenous type II secretion pathway in Escherichia coli leads to chitinase secretion.</title>
        <authorList>
            <person name="Francetic O."/>
            <person name="Belin D."/>
            <person name="Badaut C."/>
            <person name="Pugsley A.P."/>
        </authorList>
    </citation>
    <scope>SECRETION VIA THE GSP SECRETON</scope>
    <source>
        <strain>K12 / MC4100 / ATCC 35695 / DSM 6574</strain>
    </source>
</reference>
<dbReference type="EC" id="3.2.1.14"/>
<dbReference type="EC" id="3.2.1.17"/>
<dbReference type="EMBL" id="U18997">
    <property type="protein sequence ID" value="AAA58135.1"/>
    <property type="molecule type" value="Genomic_DNA"/>
</dbReference>
<dbReference type="EMBL" id="U00096">
    <property type="protein sequence ID" value="AAC76363.1"/>
    <property type="molecule type" value="Genomic_DNA"/>
</dbReference>
<dbReference type="EMBL" id="AP009048">
    <property type="protein sequence ID" value="BAE77953.1"/>
    <property type="molecule type" value="Genomic_DNA"/>
</dbReference>
<dbReference type="EMBL" id="M27176">
    <property type="protein sequence ID" value="AAC13985.1"/>
    <property type="molecule type" value="mRNA"/>
</dbReference>
<dbReference type="PIR" id="E65127">
    <property type="entry name" value="E65127"/>
</dbReference>
<dbReference type="RefSeq" id="NP_417797.1">
    <property type="nucleotide sequence ID" value="NC_000913.3"/>
</dbReference>
<dbReference type="RefSeq" id="WP_000773156.1">
    <property type="nucleotide sequence ID" value="NZ_LN832404.1"/>
</dbReference>
<dbReference type="SMR" id="P13656"/>
<dbReference type="BioGRID" id="4261016">
    <property type="interactions" value="168"/>
</dbReference>
<dbReference type="DIP" id="DIP-9276N"/>
<dbReference type="FunCoup" id="P13656">
    <property type="interactions" value="94"/>
</dbReference>
<dbReference type="IntAct" id="P13656">
    <property type="interactions" value="2"/>
</dbReference>
<dbReference type="STRING" id="511145.b3338"/>
<dbReference type="CAZy" id="CBM5">
    <property type="family name" value="Carbohydrate-Binding Module Family 5"/>
</dbReference>
<dbReference type="CAZy" id="GH18">
    <property type="family name" value="Glycoside Hydrolase Family 18"/>
</dbReference>
<dbReference type="PaxDb" id="511145-b3338"/>
<dbReference type="EnsemblBacteria" id="AAC76363">
    <property type="protein sequence ID" value="AAC76363"/>
    <property type="gene ID" value="b3338"/>
</dbReference>
<dbReference type="GeneID" id="947837"/>
<dbReference type="KEGG" id="ecj:JW3300"/>
<dbReference type="KEGG" id="eco:b3338"/>
<dbReference type="PATRIC" id="fig|1411691.4.peg.3393"/>
<dbReference type="EchoBASE" id="EB1219"/>
<dbReference type="eggNOG" id="COG3979">
    <property type="taxonomic scope" value="Bacteria"/>
</dbReference>
<dbReference type="HOGENOM" id="CLU_019399_2_0_6"/>
<dbReference type="InParanoid" id="P13656"/>
<dbReference type="OMA" id="KDANTCV"/>
<dbReference type="OrthoDB" id="6018988at2"/>
<dbReference type="BioCyc" id="EcoCyc:EG11237-MONOMER"/>
<dbReference type="BioCyc" id="MetaCyc:EG11237-MONOMER"/>
<dbReference type="PRO" id="PR:P13656"/>
<dbReference type="Proteomes" id="UP000000625">
    <property type="component" value="Chromosome"/>
</dbReference>
<dbReference type="GO" id="GO:0005576">
    <property type="term" value="C:extracellular region"/>
    <property type="evidence" value="ECO:0007669"/>
    <property type="project" value="InterPro"/>
</dbReference>
<dbReference type="GO" id="GO:0030288">
    <property type="term" value="C:outer membrane-bounded periplasmic space"/>
    <property type="evidence" value="ECO:0000314"/>
    <property type="project" value="EcoCyc"/>
</dbReference>
<dbReference type="GO" id="GO:0030246">
    <property type="term" value="F:carbohydrate binding"/>
    <property type="evidence" value="ECO:0007669"/>
    <property type="project" value="InterPro"/>
</dbReference>
<dbReference type="GO" id="GO:0008061">
    <property type="term" value="F:chitin binding"/>
    <property type="evidence" value="ECO:0007669"/>
    <property type="project" value="UniProtKB-KW"/>
</dbReference>
<dbReference type="GO" id="GO:0008843">
    <property type="term" value="F:endochitinase activity"/>
    <property type="evidence" value="ECO:0000314"/>
    <property type="project" value="EcoCyc"/>
</dbReference>
<dbReference type="GO" id="GO:0003796">
    <property type="term" value="F:lysozyme activity"/>
    <property type="evidence" value="ECO:0007669"/>
    <property type="project" value="UniProtKB-EC"/>
</dbReference>
<dbReference type="GO" id="GO:0006032">
    <property type="term" value="P:chitin catabolic process"/>
    <property type="evidence" value="ECO:0007669"/>
    <property type="project" value="UniProtKB-KW"/>
</dbReference>
<dbReference type="GO" id="GO:0000272">
    <property type="term" value="P:polysaccharide catabolic process"/>
    <property type="evidence" value="ECO:0007669"/>
    <property type="project" value="UniProtKB-KW"/>
</dbReference>
<dbReference type="CDD" id="cd12215">
    <property type="entry name" value="ChiC_BD"/>
    <property type="match status" value="1"/>
</dbReference>
<dbReference type="CDD" id="cd06543">
    <property type="entry name" value="GH18_PF-ChiA-like"/>
    <property type="match status" value="1"/>
</dbReference>
<dbReference type="FunFam" id="3.20.20.80:FF:000118">
    <property type="entry name" value="Probable bifunctional chitinase/lysozyme"/>
    <property type="match status" value="1"/>
</dbReference>
<dbReference type="Gene3D" id="2.10.10.20">
    <property type="entry name" value="Carbohydrate-binding module superfamily 5/12"/>
    <property type="match status" value="1"/>
</dbReference>
<dbReference type="Gene3D" id="3.20.20.80">
    <property type="entry name" value="Glycosidases"/>
    <property type="match status" value="1"/>
</dbReference>
<dbReference type="InterPro" id="IPR003610">
    <property type="entry name" value="CBM5/12"/>
</dbReference>
<dbReference type="InterPro" id="IPR036573">
    <property type="entry name" value="CBM_sf_5/12"/>
</dbReference>
<dbReference type="InterPro" id="IPR052750">
    <property type="entry name" value="GH18_Chitinase"/>
</dbReference>
<dbReference type="InterPro" id="IPR001223">
    <property type="entry name" value="Glyco_hydro18_cat"/>
</dbReference>
<dbReference type="InterPro" id="IPR017853">
    <property type="entry name" value="Glycoside_hydrolase_SF"/>
</dbReference>
<dbReference type="PANTHER" id="PTHR42976">
    <property type="entry name" value="BIFUNCTIONAL CHITINASE/LYSOZYME-RELATED"/>
    <property type="match status" value="1"/>
</dbReference>
<dbReference type="PANTHER" id="PTHR42976:SF1">
    <property type="entry name" value="GH18 DOMAIN-CONTAINING PROTEIN-RELATED"/>
    <property type="match status" value="1"/>
</dbReference>
<dbReference type="Pfam" id="PF02839">
    <property type="entry name" value="CBM_5_12"/>
    <property type="match status" value="1"/>
</dbReference>
<dbReference type="Pfam" id="PF00704">
    <property type="entry name" value="Glyco_hydro_18"/>
    <property type="match status" value="1"/>
</dbReference>
<dbReference type="SMART" id="SM00495">
    <property type="entry name" value="ChtBD3"/>
    <property type="match status" value="7"/>
</dbReference>
<dbReference type="SUPFAM" id="SSF51445">
    <property type="entry name" value="(Trans)glycosidases"/>
    <property type="match status" value="1"/>
</dbReference>
<dbReference type="SUPFAM" id="SSF51055">
    <property type="entry name" value="Carbohydrate binding domain"/>
    <property type="match status" value="1"/>
</dbReference>
<dbReference type="PROSITE" id="PS51910">
    <property type="entry name" value="GH18_2"/>
    <property type="match status" value="1"/>
</dbReference>
<comment type="function">
    <text evidence="5">Bifunctional enzyme with lysozyme/chitinase activity.</text>
</comment>
<comment type="catalytic activity">
    <reaction evidence="5">
        <text>Random endo-hydrolysis of N-acetyl-beta-D-glucosaminide (1-&gt;4)-beta-linkages in chitin and chitodextrins.</text>
        <dbReference type="EC" id="3.2.1.14"/>
    </reaction>
</comment>
<comment type="catalytic activity">
    <reaction evidence="5">
        <text>Hydrolysis of (1-&gt;4)-beta-linkages between N-acetylmuramic acid and N-acetyl-D-glucosamine residues in a peptidoglycan and between N-acetyl-D-glucosamine residues in chitodextrins.</text>
        <dbReference type="EC" id="3.2.1.17"/>
    </reaction>
</comment>
<comment type="subcellular location">
    <subcellularLocation>
        <location evidence="5">Periplasm</location>
    </subcellularLocation>
    <text>Secreted via the Gsp type II secretion machinery under conditions of derepressed gsp gene expression.</text>
</comment>
<comment type="induction">
    <text evidence="5">Silenced by the DNA-binding protein H-NS under standard growth conditions.</text>
</comment>
<comment type="similarity">
    <text evidence="6">Belongs to the glycosyl hydrolase 18 family. Chitinase class II subfamily.</text>
</comment>
<organism>
    <name type="scientific">Escherichia coli (strain K12)</name>
    <dbReference type="NCBI Taxonomy" id="83333"/>
    <lineage>
        <taxon>Bacteria</taxon>
        <taxon>Pseudomonadati</taxon>
        <taxon>Pseudomonadota</taxon>
        <taxon>Gammaproteobacteria</taxon>
        <taxon>Enterobacterales</taxon>
        <taxon>Enterobacteriaceae</taxon>
        <taxon>Escherichia</taxon>
    </lineage>
</organism>
<name>CHIA_ECOLI</name>
<sequence length="897" mass="97058">MKLNIFTKSMIGMGLVCSALPALAMEAWNNQQGGNKYQVIFDGKIYENAWWVSSTNCPGKAKANDATNPWRLKRTATAAEISQFGNTLSCEKSGSSSSSNSNTPASNTPANGGSATPAQGTVPSNSSVVAWNKQQGGQTWYVVFNGAVYKNAWWVASSNCPGDAKSNDASNPWRYVRAATATEISETSNPQSCTSAPQPSPDVKPAPDVKPAPDVQPAPADKSNDNYAVVAWKGQEGSSTWYVIYNGGIYKNAWWVGAANCPGDAKENDASNPWRYVRAATATEISQYGNPGSCSVKPDNNGGAVTPVDPTPETPVTPTPDNSEPSTPADSVNDYSLQAWSGQEGSEIYHVIFNGNVYKNAWWVGSKDCPRGTSAENSNNPWRLERTATAAELSQYGNPTTCEIDNGGVIVADGFQASKAYSADSIVDYNDAHYKTSVDQDAWGFVPGGDNPWKKYEPAKAWSASTVYVKGDRVVVDGQAYEALFWTQSDNPALVANQNATGSNSRPWKPLGKAQSYSNEELNNAPQFNPETLYASDTLIRFNGVNYISQSKVQKVSPSDSNPWRVFVDWTGTKERVGTPKKAWPKHVYAPYVDFTLNTIPDLAALAKNHNVNHFTLAFVVSKDANTCLPTWGTAYGMQNYAQYSKIKALREAGGDVMLSIGGANNAPLAASCKNVDDLMQHYYDIVDNLNLKVLDFDIEGTWVADQASIERRNLAVKKVQDKWKSEGKDIAIWYTLPILPTGLTPEGMNVLSDAKAKGVELAGVNVMTMDYGNAICQSANTEGQNIHGKCATSAIANLHSQLKGLHPNKSDAEIDAMMGTTPMVGVNDVQGEVFYLSDARLVMQDAQKRNLGMVGIWSIARDLPGGTNLSPEFHGLTKEQAPKYAFSEIFAPFTKQ</sequence>
<protein>
    <recommendedName>
        <fullName>Probable bifunctional chitinase/lysozyme</fullName>
    </recommendedName>
    <domain>
        <recommendedName>
            <fullName>Chitinase</fullName>
            <ecNumber>3.2.1.14</ecNumber>
        </recommendedName>
    </domain>
    <domain>
        <recommendedName>
            <fullName>Lysozyme</fullName>
            <ecNumber>3.2.1.17</ecNumber>
        </recommendedName>
    </domain>
</protein>